<sequence length="334" mass="37637">MAMAGSSVAQKTWELSNNMQEVQSIDEIYKYDKKQQQEILAAKPWTKDHHYFKYCKVSALALLKMVMHARSGGNLEVMGLMLGKVDGETMIIMDSFALPVEGTETRVNAQAAAYEYMAAYIENAKQVGRLENAIGWYHSHPGYGCWLSGIDVSTQMLNQQFQEPFVAVVIDPTRTISAGKVNLGAFRTYPKGYKPPDEGPSEYQTIPLNKIEDFGVHCKQYYALEVTYFKSSLDRKLLELLWNKYWVNTLSSSSLLTNADYTTGQVFDLSEKLEQSEAQLGRGSFMLGLETHDRKSEDKLAKATRDSCKTTIEAIHGLMSQVIKDKLFNQINTA</sequence>
<feature type="chain" id="PRO_0000194839" description="COP9 signalosome complex subunit 5">
    <location>
        <begin position="1"/>
        <end position="334"/>
    </location>
</feature>
<feature type="domain" description="MPN" evidence="3">
    <location>
        <begin position="55"/>
        <end position="192"/>
    </location>
</feature>
<feature type="short sequence motif" description="JAMM motif" evidence="3">
    <location>
        <begin position="138"/>
        <end position="151"/>
    </location>
</feature>
<feature type="binding site" evidence="3">
    <location>
        <position position="138"/>
    </location>
    <ligand>
        <name>Zn(2+)</name>
        <dbReference type="ChEBI" id="CHEBI:29105"/>
        <note>catalytic</note>
    </ligand>
</feature>
<feature type="binding site" evidence="3">
    <location>
        <position position="140"/>
    </location>
    <ligand>
        <name>Zn(2+)</name>
        <dbReference type="ChEBI" id="CHEBI:29105"/>
        <note>catalytic</note>
    </ligand>
</feature>
<feature type="binding site" evidence="3">
    <location>
        <position position="151"/>
    </location>
    <ligand>
        <name>Zn(2+)</name>
        <dbReference type="ChEBI" id="CHEBI:29105"/>
        <note>catalytic</note>
    </ligand>
</feature>
<protein>
    <recommendedName>
        <fullName>COP9 signalosome complex subunit 5</fullName>
        <shortName>Signalosome subunit 5</shortName>
        <ecNumber>3.4.-.-</ecNumber>
    </recommendedName>
</protein>
<gene>
    <name type="primary">cops5</name>
    <name type="synonym">csn5</name>
    <name type="ORF">TTpA010d21.1</name>
</gene>
<evidence type="ECO:0000250" key="1"/>
<evidence type="ECO:0000250" key="2">
    <source>
        <dbReference type="UniProtKB" id="Q92905"/>
    </source>
</evidence>
<evidence type="ECO:0000255" key="3">
    <source>
        <dbReference type="PROSITE-ProRule" id="PRU01182"/>
    </source>
</evidence>
<evidence type="ECO:0000305" key="4"/>
<organism>
    <name type="scientific">Xenopus tropicalis</name>
    <name type="common">Western clawed frog</name>
    <name type="synonym">Silurana tropicalis</name>
    <dbReference type="NCBI Taxonomy" id="8364"/>
    <lineage>
        <taxon>Eukaryota</taxon>
        <taxon>Metazoa</taxon>
        <taxon>Chordata</taxon>
        <taxon>Craniata</taxon>
        <taxon>Vertebrata</taxon>
        <taxon>Euteleostomi</taxon>
        <taxon>Amphibia</taxon>
        <taxon>Batrachia</taxon>
        <taxon>Anura</taxon>
        <taxon>Pipoidea</taxon>
        <taxon>Pipidae</taxon>
        <taxon>Xenopodinae</taxon>
        <taxon>Xenopus</taxon>
        <taxon>Silurana</taxon>
    </lineage>
</organism>
<accession>Q6P635</accession>
<accession>Q28HI7</accession>
<name>CSN5_XENTR</name>
<proteinExistence type="evidence at transcript level"/>
<keyword id="KW-0963">Cytoplasm</keyword>
<keyword id="KW-0968">Cytoplasmic vesicle</keyword>
<keyword id="KW-0378">Hydrolase</keyword>
<keyword id="KW-0479">Metal-binding</keyword>
<keyword id="KW-0482">Metalloprotease</keyword>
<keyword id="KW-0539">Nucleus</keyword>
<keyword id="KW-0645">Protease</keyword>
<keyword id="KW-1185">Reference proteome</keyword>
<keyword id="KW-0736">Signalosome</keyword>
<keyword id="KW-0770">Synapse</keyword>
<keyword id="KW-0862">Zinc</keyword>
<comment type="function">
    <text evidence="2">Probable protease subunit of the COP9 signalosome complex (CSN), a complex involved in various cellular and developmental processes. The CSN complex is an essential regulator of the ubiquitin (Ubl) conjugation pathway by mediating the deneddylation of the cullin subunits of E3 ligase complexes, leading to modify the Ubl ligase activity. In the complex, it probably acts as the catalytic center that mediates the cleavage of nedd8 from cullins. It however has no metalloprotease activity by itself and requires the other subunits of the CSN complex.</text>
</comment>
<comment type="cofactor">
    <cofactor evidence="1">
        <name>a divalent metal cation</name>
        <dbReference type="ChEBI" id="CHEBI:60240"/>
    </cofactor>
</comment>
<comment type="subunit">
    <text evidence="2">Component of the CSN complex, probably composed of cops1, cops2, cops3, cops4, cops5, cops6, cops7, cops8 and cops9.</text>
</comment>
<comment type="subcellular location">
    <subcellularLocation>
        <location evidence="2">Cytoplasm</location>
        <location evidence="2">Cytosol</location>
    </subcellularLocation>
    <subcellularLocation>
        <location evidence="2">Nucleus</location>
    </subcellularLocation>
    <subcellularLocation>
        <location evidence="2">Cytoplasm</location>
        <location evidence="2">Perinuclear region</location>
    </subcellularLocation>
    <subcellularLocation>
        <location evidence="2">Cytoplasmic vesicle</location>
        <location evidence="2">Secretory vesicle</location>
        <location evidence="2">Synaptic vesicle</location>
    </subcellularLocation>
</comment>
<comment type="domain">
    <text evidence="1">The JAMM motif is essential for the protease activity of the CSN complex resulting in deneddylation of cullins. It constitutes the catalytic center of the complex (By similarity).</text>
</comment>
<comment type="miscellaneous">
    <text evidence="1">The CSN complex is associated with some 'Lys-63'-specific deubiquitination. Such activity is however not mediated by the core CSN complex but by the brcc3/brcc36 component of the BRISC complex (By similarity).</text>
</comment>
<comment type="similarity">
    <text evidence="4">Belongs to the peptidase M67A family. CSN5 subfamily.</text>
</comment>
<dbReference type="EC" id="3.4.-.-"/>
<dbReference type="EMBL" id="CR760870">
    <property type="protein sequence ID" value="CAJ82897.1"/>
    <property type="molecule type" value="mRNA"/>
</dbReference>
<dbReference type="EMBL" id="BC062499">
    <property type="protein sequence ID" value="AAH62499.1"/>
    <property type="molecule type" value="mRNA"/>
</dbReference>
<dbReference type="RefSeq" id="NP_989109.1">
    <property type="nucleotide sequence ID" value="NM_203778.1"/>
</dbReference>
<dbReference type="SMR" id="Q6P635"/>
<dbReference type="FunCoup" id="Q6P635">
    <property type="interactions" value="3973"/>
</dbReference>
<dbReference type="STRING" id="8364.ENSXETP00000012979"/>
<dbReference type="MEROPS" id="M67.A13"/>
<dbReference type="PaxDb" id="8364-ENSXETP00000050270"/>
<dbReference type="DNASU" id="394714"/>
<dbReference type="GeneID" id="394714"/>
<dbReference type="KEGG" id="xtr:394714"/>
<dbReference type="AGR" id="Xenbase:XB-GENE-952827"/>
<dbReference type="CTD" id="10987"/>
<dbReference type="Xenbase" id="XB-GENE-952827">
    <property type="gene designation" value="cops5"/>
</dbReference>
<dbReference type="eggNOG" id="KOG1554">
    <property type="taxonomic scope" value="Eukaryota"/>
</dbReference>
<dbReference type="HOGENOM" id="CLU_053034_0_2_1"/>
<dbReference type="InParanoid" id="Q6P635"/>
<dbReference type="OMA" id="VKMKLFQ"/>
<dbReference type="OrthoDB" id="10266268at2759"/>
<dbReference type="PhylomeDB" id="Q6P635"/>
<dbReference type="Reactome" id="R-XTR-5696394">
    <property type="pathway name" value="DNA Damage Recognition in GG-NER"/>
</dbReference>
<dbReference type="Reactome" id="R-XTR-6781823">
    <property type="pathway name" value="Formation of TC-NER Pre-Incision Complex"/>
</dbReference>
<dbReference type="Reactome" id="R-XTR-8951664">
    <property type="pathway name" value="Neddylation"/>
</dbReference>
<dbReference type="Proteomes" id="UP000008143">
    <property type="component" value="Chromosome 6"/>
</dbReference>
<dbReference type="GO" id="GO:0008180">
    <property type="term" value="C:COP9 signalosome"/>
    <property type="evidence" value="ECO:0007669"/>
    <property type="project" value="UniProtKB-KW"/>
</dbReference>
<dbReference type="GO" id="GO:0005829">
    <property type="term" value="C:cytosol"/>
    <property type="evidence" value="ECO:0000250"/>
    <property type="project" value="UniProtKB"/>
</dbReference>
<dbReference type="GO" id="GO:0005634">
    <property type="term" value="C:nucleus"/>
    <property type="evidence" value="ECO:0000250"/>
    <property type="project" value="UniProtKB"/>
</dbReference>
<dbReference type="GO" id="GO:0048471">
    <property type="term" value="C:perinuclear region of cytoplasm"/>
    <property type="evidence" value="ECO:0007669"/>
    <property type="project" value="UniProtKB-SubCell"/>
</dbReference>
<dbReference type="GO" id="GO:0008021">
    <property type="term" value="C:synaptic vesicle"/>
    <property type="evidence" value="ECO:0007669"/>
    <property type="project" value="UniProtKB-SubCell"/>
</dbReference>
<dbReference type="GO" id="GO:0046872">
    <property type="term" value="F:metal ion binding"/>
    <property type="evidence" value="ECO:0007669"/>
    <property type="project" value="UniProtKB-KW"/>
</dbReference>
<dbReference type="GO" id="GO:0008237">
    <property type="term" value="F:metallopeptidase activity"/>
    <property type="evidence" value="ECO:0007669"/>
    <property type="project" value="UniProtKB-KW"/>
</dbReference>
<dbReference type="GO" id="GO:0043066">
    <property type="term" value="P:negative regulation of apoptotic process"/>
    <property type="evidence" value="ECO:0000250"/>
    <property type="project" value="UniProtKB"/>
</dbReference>
<dbReference type="GO" id="GO:0051091">
    <property type="term" value="P:positive regulation of DNA-binding transcription factor activity"/>
    <property type="evidence" value="ECO:0000250"/>
    <property type="project" value="UniProtKB"/>
</dbReference>
<dbReference type="GO" id="GO:0006508">
    <property type="term" value="P:proteolysis"/>
    <property type="evidence" value="ECO:0007669"/>
    <property type="project" value="UniProtKB-KW"/>
</dbReference>
<dbReference type="CDD" id="cd08069">
    <property type="entry name" value="MPN_RPN11_CSN5"/>
    <property type="match status" value="1"/>
</dbReference>
<dbReference type="FunFam" id="3.40.140.10:FF:000203">
    <property type="entry name" value="COP9 signalosome complex subunit 5"/>
    <property type="match status" value="1"/>
</dbReference>
<dbReference type="Gene3D" id="3.40.140.10">
    <property type="entry name" value="Cytidine Deaminase, domain 2"/>
    <property type="match status" value="1"/>
</dbReference>
<dbReference type="InterPro" id="IPR040961">
    <property type="entry name" value="CSN5_C"/>
</dbReference>
<dbReference type="InterPro" id="IPR000555">
    <property type="entry name" value="JAMM/MPN+_dom"/>
</dbReference>
<dbReference type="InterPro" id="IPR050242">
    <property type="entry name" value="JAMM_MPN+_peptidase_M67A"/>
</dbReference>
<dbReference type="InterPro" id="IPR037518">
    <property type="entry name" value="MPN"/>
</dbReference>
<dbReference type="PANTHER" id="PTHR10410">
    <property type="entry name" value="EUKARYOTIC TRANSLATION INITIATION FACTOR 3 -RELATED"/>
    <property type="match status" value="1"/>
</dbReference>
<dbReference type="Pfam" id="PF18323">
    <property type="entry name" value="CSN5_C"/>
    <property type="match status" value="1"/>
</dbReference>
<dbReference type="Pfam" id="PF01398">
    <property type="entry name" value="JAB"/>
    <property type="match status" value="1"/>
</dbReference>
<dbReference type="SMART" id="SM00232">
    <property type="entry name" value="JAB_MPN"/>
    <property type="match status" value="1"/>
</dbReference>
<dbReference type="SUPFAM" id="SSF102712">
    <property type="entry name" value="JAB1/MPN domain"/>
    <property type="match status" value="1"/>
</dbReference>
<dbReference type="PROSITE" id="PS50249">
    <property type="entry name" value="MPN"/>
    <property type="match status" value="1"/>
</dbReference>
<reference key="1">
    <citation type="submission" date="2006-03" db="EMBL/GenBank/DDBJ databases">
        <authorList>
            <consortium name="Sanger Xenopus tropicalis EST/cDNA project"/>
        </authorList>
    </citation>
    <scope>NUCLEOTIDE SEQUENCE [LARGE SCALE MRNA]</scope>
    <source>
        <tissue>Tadpole</tissue>
    </source>
</reference>
<reference key="2">
    <citation type="submission" date="2003-11" db="EMBL/GenBank/DDBJ databases">
        <authorList>
            <consortium name="NIH - Xenopus Gene Collection (XGC) project"/>
        </authorList>
    </citation>
    <scope>NUCLEOTIDE SEQUENCE [LARGE SCALE MRNA]</scope>
    <source>
        <tissue>Embryo</tissue>
    </source>
</reference>